<evidence type="ECO:0000250" key="1"/>
<evidence type="ECO:0000250" key="2">
    <source>
        <dbReference type="UniProtKB" id="Q60759"/>
    </source>
</evidence>
<evidence type="ECO:0000255" key="3"/>
<evidence type="ECO:0000269" key="4">
    <source>
    </source>
</evidence>
<evidence type="ECO:0000269" key="5">
    <source>
    </source>
</evidence>
<evidence type="ECO:0000269" key="6">
    <source>
    </source>
</evidence>
<evidence type="ECO:0000269" key="7">
    <source>
    </source>
</evidence>
<evidence type="ECO:0000269" key="8">
    <source>
    </source>
</evidence>
<evidence type="ECO:0000269" key="9">
    <source>
    </source>
</evidence>
<evidence type="ECO:0000269" key="10">
    <source>
    </source>
</evidence>
<evidence type="ECO:0000269" key="11">
    <source>
    </source>
</evidence>
<evidence type="ECO:0000269" key="12">
    <source>
    </source>
</evidence>
<evidence type="ECO:0000269" key="13">
    <source>
    </source>
</evidence>
<evidence type="ECO:0000269" key="14">
    <source>
    </source>
</evidence>
<evidence type="ECO:0000303" key="15">
    <source>
    </source>
</evidence>
<evidence type="ECO:0000305" key="16"/>
<evidence type="ECO:0007829" key="17">
    <source>
        <dbReference type="PDB" id="1SIQ"/>
    </source>
</evidence>
<gene>
    <name type="primary">GCDH</name>
</gene>
<name>GCDH_HUMAN</name>
<comment type="function">
    <text evidence="6 9 10">Catalyzes the oxidative decarboxylation of glutaryl-CoA to crotonyl-CoA and CO(2) in the degradative pathway of L-lysine, L-hydroxylysine, and L-tryptophan metabolism. It uses electron transfer flavoprotein as its electron acceptor. Isoform Short is inactive.</text>
</comment>
<comment type="catalytic activity">
    <reaction evidence="10">
        <text>glutaryl-CoA + oxidized [electron-transfer flavoprotein] + 2 H(+) = (2E)-butenoyl-CoA + reduced [electron-transfer flavoprotein] + CO2</text>
        <dbReference type="Rhea" id="RHEA:13389"/>
        <dbReference type="Rhea" id="RHEA-COMP:10685"/>
        <dbReference type="Rhea" id="RHEA-COMP:10686"/>
        <dbReference type="ChEBI" id="CHEBI:15378"/>
        <dbReference type="ChEBI" id="CHEBI:16526"/>
        <dbReference type="ChEBI" id="CHEBI:57332"/>
        <dbReference type="ChEBI" id="CHEBI:57378"/>
        <dbReference type="ChEBI" id="CHEBI:57692"/>
        <dbReference type="ChEBI" id="CHEBI:58307"/>
        <dbReference type="EC" id="1.3.8.6"/>
    </reaction>
</comment>
<comment type="cofactor">
    <cofactor>
        <name>FAD</name>
        <dbReference type="ChEBI" id="CHEBI:57692"/>
    </cofactor>
</comment>
<comment type="activity regulation">
    <text evidence="9">Strongly inhibited by MCPA-CoA, a metabolite of hypoglycin which is present in unripened fruit of the ackee tree.</text>
</comment>
<comment type="biophysicochemical properties">
    <kinetics>
        <KM evidence="6 9">4.7 uM for glutaryl-CoA (at pH 6.5)</KM>
        <KM evidence="6 9">5.5 uM for glutaryl-CoA (at pH 7.5)</KM>
        <KM evidence="6 9">8.1 uM for glutaryl-CoA (at pH 7.6)</KM>
        <KM evidence="6 9">34 uM for glutaryl-CoA (at pH 8.5)</KM>
        <text>Release of crotonyl-CoA product from the enzyme is the rate-determining step in its steady-state turnover.</text>
    </kinetics>
</comment>
<comment type="pathway">
    <text>Amino-acid metabolism; lysine degradation.</text>
</comment>
<comment type="pathway">
    <text>Amino-acid metabolism; tryptophan metabolism.</text>
</comment>
<comment type="subunit">
    <text evidence="5 7">Homotetramer.</text>
</comment>
<comment type="subcellular location">
    <subcellularLocation>
        <location>Mitochondrion matrix</location>
    </subcellularLocation>
</comment>
<comment type="alternative products">
    <event type="alternative splicing"/>
    <isoform>
        <id>Q92947-1</id>
        <name>Long</name>
        <sequence type="displayed"/>
    </isoform>
    <isoform>
        <id>Q92947-2</id>
        <name>Short</name>
        <sequence type="described" ref="VSP_000145"/>
    </isoform>
</comment>
<comment type="tissue specificity">
    <text>Isoform Long and isoform Short are expressed in fibroblasts and liver.</text>
</comment>
<comment type="disease" evidence="4 7 8 10 11 12 13 14">
    <disease id="DI-00512">
        <name>Glutaric aciduria 1</name>
        <acronym>GA1</acronym>
        <description>An autosomal recessive metabolic disorder characterized by progressive dystonia and athetosis due to gliosis and neuronal loss in the basal ganglia.</description>
        <dbReference type="MIM" id="231670"/>
    </disease>
    <text>The disease is caused by variants affecting the gene represented in this entry.</text>
</comment>
<comment type="similarity">
    <text evidence="16">Belongs to the acyl-CoA dehydrogenase family.</text>
</comment>
<sequence>MALRGVSVRLLSRGPGLHVLRTWVSSAAQTEKGGRTQSQLAKSSRPEFDWQDPLVLEEQLTTDEILIRDTFRTYCQERLMPRILLANRNEVFHREIISEMGELGVLGPTIKGYGCAGVSSVAYGLLARELERVDSGYRSAMSVQSSLVMHPIYAYGSEEQRQKYLPQLAKGELLGCFGLTEPNSGSDPSSMETRAHYNSSNKSYTLNGTKTWITNSPMADLFVVWARCEDGCIRGFLLEKGMRGLSAPRIQGKFSLRASATGMIIMDGVEVPEENVLPGASSLGGPFGCLNNARYGIAWGVLGASEFCLHTARQYALDRMQFGVPLARNQLIQKKLADMLTEITLGLHACLQLGRLKDQDKAAPEMVSLLKRNNCGKALDIARQARDMLGGNGISDEYHVIRHAMNLEAVNTYEGTHDIHALILGRAITGIQAFTASK</sequence>
<dbReference type="EC" id="1.3.8.6"/>
<dbReference type="EMBL" id="U69141">
    <property type="protein sequence ID" value="AAB08455.1"/>
    <property type="molecule type" value="mRNA"/>
</dbReference>
<dbReference type="EMBL" id="AF012342">
    <property type="protein sequence ID" value="AAC52079.1"/>
    <property type="molecule type" value="Genomic_DNA"/>
</dbReference>
<dbReference type="EMBL" id="AF012339">
    <property type="protein sequence ID" value="AAC52079.1"/>
    <property type="status" value="JOINED"/>
    <property type="molecule type" value="Genomic_DNA"/>
</dbReference>
<dbReference type="EMBL" id="AF012340">
    <property type="protein sequence ID" value="AAC52079.1"/>
    <property type="status" value="JOINED"/>
    <property type="molecule type" value="Genomic_DNA"/>
</dbReference>
<dbReference type="EMBL" id="AF012341">
    <property type="protein sequence ID" value="AAC52079.1"/>
    <property type="status" value="JOINED"/>
    <property type="molecule type" value="Genomic_DNA"/>
</dbReference>
<dbReference type="EMBL" id="BT006706">
    <property type="protein sequence ID" value="AAP35352.1"/>
    <property type="molecule type" value="mRNA"/>
</dbReference>
<dbReference type="EMBL" id="AK290407">
    <property type="protein sequence ID" value="BAF83096.1"/>
    <property type="molecule type" value="mRNA"/>
</dbReference>
<dbReference type="EMBL" id="AD000092">
    <property type="protein sequence ID" value="AAB51174.1"/>
    <property type="molecule type" value="Genomic_DNA"/>
</dbReference>
<dbReference type="EMBL" id="CH471106">
    <property type="protein sequence ID" value="EAW84324.1"/>
    <property type="molecule type" value="Genomic_DNA"/>
</dbReference>
<dbReference type="EMBL" id="BC002579">
    <property type="protein sequence ID" value="AAH02579.1"/>
    <property type="molecule type" value="mRNA"/>
</dbReference>
<dbReference type="CCDS" id="CCDS12286.1">
    <molecule id="Q92947-1"/>
</dbReference>
<dbReference type="PIR" id="T44260">
    <property type="entry name" value="T44260"/>
</dbReference>
<dbReference type="PIR" id="T45073">
    <property type="entry name" value="T45073"/>
</dbReference>
<dbReference type="RefSeq" id="NP_000150.1">
    <molecule id="Q92947-1"/>
    <property type="nucleotide sequence ID" value="NM_000159.4"/>
</dbReference>
<dbReference type="RefSeq" id="NP_039663.1">
    <molecule id="Q92947-2"/>
    <property type="nucleotide sequence ID" value="NM_013976.5"/>
</dbReference>
<dbReference type="PDB" id="1SIQ">
    <property type="method" value="X-ray"/>
    <property type="resolution" value="2.10 A"/>
    <property type="chains" value="A=47-438"/>
</dbReference>
<dbReference type="PDB" id="1SIR">
    <property type="method" value="X-ray"/>
    <property type="resolution" value="2.60 A"/>
    <property type="chains" value="A=45-438"/>
</dbReference>
<dbReference type="PDB" id="2R0M">
    <property type="method" value="X-ray"/>
    <property type="resolution" value="2.70 A"/>
    <property type="chains" value="A=45-438"/>
</dbReference>
<dbReference type="PDB" id="2R0N">
    <property type="method" value="X-ray"/>
    <property type="resolution" value="2.30 A"/>
    <property type="chains" value="A=45-438"/>
</dbReference>
<dbReference type="PDBsum" id="1SIQ"/>
<dbReference type="PDBsum" id="1SIR"/>
<dbReference type="PDBsum" id="2R0M"/>
<dbReference type="PDBsum" id="2R0N"/>
<dbReference type="SMR" id="Q92947"/>
<dbReference type="BioGRID" id="108909">
    <property type="interactions" value="107"/>
</dbReference>
<dbReference type="FunCoup" id="Q92947">
    <property type="interactions" value="1404"/>
</dbReference>
<dbReference type="IntAct" id="Q92947">
    <property type="interactions" value="46"/>
</dbReference>
<dbReference type="MINT" id="Q92947"/>
<dbReference type="STRING" id="9606.ENSP00000466845"/>
<dbReference type="BindingDB" id="Q92947"/>
<dbReference type="ChEMBL" id="CHEMBL3817721"/>
<dbReference type="DrugBank" id="DB03147">
    <property type="generic name" value="Flavin adenine dinucleotide"/>
</dbReference>
<dbReference type="DrugBank" id="DB03245">
    <property type="generic name" value="S-4-Nitrobutyryl-CoA"/>
</dbReference>
<dbReference type="iPTMnet" id="Q92947"/>
<dbReference type="PhosphoSitePlus" id="Q92947"/>
<dbReference type="SwissPalm" id="Q92947"/>
<dbReference type="BioMuta" id="GCDH"/>
<dbReference type="DMDM" id="2492631"/>
<dbReference type="jPOST" id="Q92947"/>
<dbReference type="MassIVE" id="Q92947"/>
<dbReference type="PaxDb" id="9606-ENSP00000222214"/>
<dbReference type="PeptideAtlas" id="Q92947"/>
<dbReference type="ProteomicsDB" id="75618">
    <molecule id="Q92947-1"/>
</dbReference>
<dbReference type="ProteomicsDB" id="75619">
    <molecule id="Q92947-2"/>
</dbReference>
<dbReference type="Pumba" id="Q92947"/>
<dbReference type="Antibodypedia" id="26250">
    <property type="antibodies" value="257 antibodies from 26 providers"/>
</dbReference>
<dbReference type="DNASU" id="2639"/>
<dbReference type="Ensembl" id="ENST00000222214.10">
    <molecule id="Q92947-1"/>
    <property type="protein sequence ID" value="ENSP00000222214.4"/>
    <property type="gene ID" value="ENSG00000105607.14"/>
</dbReference>
<dbReference type="Ensembl" id="ENST00000591470.5">
    <molecule id="Q92947-1"/>
    <property type="protein sequence ID" value="ENSP00000466845.1"/>
    <property type="gene ID" value="ENSG00000105607.14"/>
</dbReference>
<dbReference type="Ensembl" id="ENST00000714073.1">
    <molecule id="Q92947-2"/>
    <property type="protein sequence ID" value="ENSP00000519364.1"/>
    <property type="gene ID" value="ENSG00000105607.14"/>
</dbReference>
<dbReference type="Ensembl" id="ENST00000714074.1">
    <molecule id="Q92947-1"/>
    <property type="protein sequence ID" value="ENSP00000519365.1"/>
    <property type="gene ID" value="ENSG00000105607.14"/>
</dbReference>
<dbReference type="GeneID" id="2639"/>
<dbReference type="KEGG" id="hsa:2639"/>
<dbReference type="MANE-Select" id="ENST00000222214.10">
    <property type="protein sequence ID" value="ENSP00000222214.4"/>
    <property type="RefSeq nucleotide sequence ID" value="NM_000159.4"/>
    <property type="RefSeq protein sequence ID" value="NP_000150.1"/>
</dbReference>
<dbReference type="UCSC" id="uc002mvq.5">
    <molecule id="Q92947-1"/>
    <property type="organism name" value="human"/>
</dbReference>
<dbReference type="AGR" id="HGNC:4189"/>
<dbReference type="CTD" id="2639"/>
<dbReference type="DisGeNET" id="2639"/>
<dbReference type="GeneCards" id="GCDH"/>
<dbReference type="GeneReviews" id="GCDH"/>
<dbReference type="HGNC" id="HGNC:4189">
    <property type="gene designation" value="GCDH"/>
</dbReference>
<dbReference type="HPA" id="ENSG00000105607">
    <property type="expression patterns" value="Tissue enhanced (liver)"/>
</dbReference>
<dbReference type="MalaCards" id="GCDH"/>
<dbReference type="MIM" id="231670">
    <property type="type" value="phenotype"/>
</dbReference>
<dbReference type="MIM" id="608801">
    <property type="type" value="gene"/>
</dbReference>
<dbReference type="neXtProt" id="NX_Q92947"/>
<dbReference type="OpenTargets" id="ENSG00000105607"/>
<dbReference type="Orphanet" id="25">
    <property type="disease" value="Glutaryl-CoA dehydrogenase deficiency"/>
</dbReference>
<dbReference type="PharmGKB" id="PA28604"/>
<dbReference type="VEuPathDB" id="HostDB:ENSG00000105607"/>
<dbReference type="eggNOG" id="KOG0138">
    <property type="taxonomic scope" value="Eukaryota"/>
</dbReference>
<dbReference type="GeneTree" id="ENSGT00940000158116"/>
<dbReference type="HOGENOM" id="CLU_018204_8_0_1"/>
<dbReference type="InParanoid" id="Q92947"/>
<dbReference type="OMA" id="HMMNLES"/>
<dbReference type="OrthoDB" id="435240at2759"/>
<dbReference type="PAN-GO" id="Q92947">
    <property type="GO annotations" value="5 GO annotations based on evolutionary models"/>
</dbReference>
<dbReference type="PhylomeDB" id="Q92947"/>
<dbReference type="TreeFam" id="TF105051"/>
<dbReference type="BRENDA" id="1.3.8.6">
    <property type="organism ID" value="2681"/>
</dbReference>
<dbReference type="PathwayCommons" id="Q92947"/>
<dbReference type="Reactome" id="R-HSA-71064">
    <property type="pathway name" value="Lysine catabolism"/>
</dbReference>
<dbReference type="SABIO-RK" id="Q92947"/>
<dbReference type="SignaLink" id="Q92947"/>
<dbReference type="UniPathway" id="UPA00224"/>
<dbReference type="UniPathway" id="UPA00225"/>
<dbReference type="BioGRID-ORCS" id="2639">
    <property type="hits" value="19 hits in 1166 CRISPR screens"/>
</dbReference>
<dbReference type="ChiTaRS" id="GCDH">
    <property type="organism name" value="human"/>
</dbReference>
<dbReference type="EvolutionaryTrace" id="Q92947"/>
<dbReference type="GenomeRNAi" id="2639"/>
<dbReference type="Pharos" id="Q92947">
    <property type="development level" value="Tbio"/>
</dbReference>
<dbReference type="PRO" id="PR:Q92947"/>
<dbReference type="Proteomes" id="UP000005640">
    <property type="component" value="Chromosome 19"/>
</dbReference>
<dbReference type="RNAct" id="Q92947">
    <property type="molecule type" value="protein"/>
</dbReference>
<dbReference type="Bgee" id="ENSG00000105607">
    <property type="expression patterns" value="Expressed in right lobe of liver and 181 other cell types or tissues"/>
</dbReference>
<dbReference type="ExpressionAtlas" id="Q92947">
    <property type="expression patterns" value="baseline and differential"/>
</dbReference>
<dbReference type="GO" id="GO:0005759">
    <property type="term" value="C:mitochondrial matrix"/>
    <property type="evidence" value="ECO:0000304"/>
    <property type="project" value="Reactome"/>
</dbReference>
<dbReference type="GO" id="GO:0005739">
    <property type="term" value="C:mitochondrion"/>
    <property type="evidence" value="ECO:0000314"/>
    <property type="project" value="HPA"/>
</dbReference>
<dbReference type="GO" id="GO:0000062">
    <property type="term" value="F:fatty-acyl-CoA binding"/>
    <property type="evidence" value="ECO:0000318"/>
    <property type="project" value="GO_Central"/>
</dbReference>
<dbReference type="GO" id="GO:0050660">
    <property type="term" value="F:flavin adenine dinucleotide binding"/>
    <property type="evidence" value="ECO:0000318"/>
    <property type="project" value="GO_Central"/>
</dbReference>
<dbReference type="GO" id="GO:0004361">
    <property type="term" value="F:glutaryl-CoA dehydrogenase activity"/>
    <property type="evidence" value="ECO:0000314"/>
    <property type="project" value="HGNC"/>
</dbReference>
<dbReference type="GO" id="GO:0033539">
    <property type="term" value="P:fatty acid beta-oxidation using acyl-CoA dehydrogenase"/>
    <property type="evidence" value="ECO:0000314"/>
    <property type="project" value="UniProtKB"/>
</dbReference>
<dbReference type="GO" id="GO:0046949">
    <property type="term" value="P:fatty-acyl-CoA biosynthetic process"/>
    <property type="evidence" value="ECO:0000318"/>
    <property type="project" value="GO_Central"/>
</dbReference>
<dbReference type="GO" id="GO:0006568">
    <property type="term" value="P:L-tryptophan metabolic process"/>
    <property type="evidence" value="ECO:0007669"/>
    <property type="project" value="UniProtKB-UniPathway"/>
</dbReference>
<dbReference type="CDD" id="cd01151">
    <property type="entry name" value="GCD"/>
    <property type="match status" value="1"/>
</dbReference>
<dbReference type="FunFam" id="1.20.140.10:FF:000006">
    <property type="entry name" value="Glutaryl-CoA dehydrogenase, mitochondrial"/>
    <property type="match status" value="1"/>
</dbReference>
<dbReference type="FunFam" id="2.40.110.10:FF:000008">
    <property type="entry name" value="Glutaryl-CoA dehydrogenase, mitochondrial"/>
    <property type="match status" value="1"/>
</dbReference>
<dbReference type="FunFam" id="1.10.540.10:FF:000003">
    <property type="entry name" value="glutaryl-CoA dehydrogenase, mitochondrial"/>
    <property type="match status" value="1"/>
</dbReference>
<dbReference type="Gene3D" id="1.10.540.10">
    <property type="entry name" value="Acyl-CoA dehydrogenase/oxidase, N-terminal domain"/>
    <property type="match status" value="1"/>
</dbReference>
<dbReference type="Gene3D" id="2.40.110.10">
    <property type="entry name" value="Butyryl-CoA Dehydrogenase, subunit A, domain 2"/>
    <property type="match status" value="1"/>
</dbReference>
<dbReference type="Gene3D" id="1.20.140.10">
    <property type="entry name" value="Butyryl-CoA Dehydrogenase, subunit A, domain 3"/>
    <property type="match status" value="1"/>
</dbReference>
<dbReference type="InterPro" id="IPR006089">
    <property type="entry name" value="Acyl-CoA_DH_CS"/>
</dbReference>
<dbReference type="InterPro" id="IPR006091">
    <property type="entry name" value="Acyl-CoA_Oxase/DH_mid-dom"/>
</dbReference>
<dbReference type="InterPro" id="IPR046373">
    <property type="entry name" value="Acyl-CoA_Oxase/DH_mid-dom_sf"/>
</dbReference>
<dbReference type="InterPro" id="IPR036250">
    <property type="entry name" value="AcylCo_DH-like_C"/>
</dbReference>
<dbReference type="InterPro" id="IPR009075">
    <property type="entry name" value="AcylCo_DH/oxidase_C"/>
</dbReference>
<dbReference type="InterPro" id="IPR013786">
    <property type="entry name" value="AcylCoA_DH/ox_N"/>
</dbReference>
<dbReference type="InterPro" id="IPR037069">
    <property type="entry name" value="AcylCoA_DH/ox_N_sf"/>
</dbReference>
<dbReference type="InterPro" id="IPR009100">
    <property type="entry name" value="AcylCoA_DH/oxidase_NM_dom_sf"/>
</dbReference>
<dbReference type="InterPro" id="IPR052033">
    <property type="entry name" value="Glutaryl-CoA_DH_mitochondrial"/>
</dbReference>
<dbReference type="PANTHER" id="PTHR42807">
    <property type="entry name" value="GLUTARYL-COA DEHYDROGENASE, MITOCHONDRIAL"/>
    <property type="match status" value="1"/>
</dbReference>
<dbReference type="PANTHER" id="PTHR42807:SF1">
    <property type="entry name" value="GLUTARYL-COA DEHYDROGENASE, MITOCHONDRIAL"/>
    <property type="match status" value="1"/>
</dbReference>
<dbReference type="Pfam" id="PF00441">
    <property type="entry name" value="Acyl-CoA_dh_1"/>
    <property type="match status" value="1"/>
</dbReference>
<dbReference type="Pfam" id="PF02770">
    <property type="entry name" value="Acyl-CoA_dh_M"/>
    <property type="match status" value="1"/>
</dbReference>
<dbReference type="Pfam" id="PF02771">
    <property type="entry name" value="Acyl-CoA_dh_N"/>
    <property type="match status" value="1"/>
</dbReference>
<dbReference type="SUPFAM" id="SSF47203">
    <property type="entry name" value="Acyl-CoA dehydrogenase C-terminal domain-like"/>
    <property type="match status" value="1"/>
</dbReference>
<dbReference type="SUPFAM" id="SSF56645">
    <property type="entry name" value="Acyl-CoA dehydrogenase NM domain-like"/>
    <property type="match status" value="1"/>
</dbReference>
<dbReference type="PROSITE" id="PS00072">
    <property type="entry name" value="ACYL_COA_DH_1"/>
    <property type="match status" value="1"/>
</dbReference>
<dbReference type="PROSITE" id="PS00073">
    <property type="entry name" value="ACYL_COA_DH_2"/>
    <property type="match status" value="1"/>
</dbReference>
<keyword id="KW-0002">3D-structure</keyword>
<keyword id="KW-0007">Acetylation</keyword>
<keyword id="KW-0025">Alternative splicing</keyword>
<keyword id="KW-0225">Disease variant</keyword>
<keyword id="KW-0274">FAD</keyword>
<keyword id="KW-0285">Flavoprotein</keyword>
<keyword id="KW-0316">Glutaricaciduria</keyword>
<keyword id="KW-0496">Mitochondrion</keyword>
<keyword id="KW-0560">Oxidoreductase</keyword>
<keyword id="KW-1267">Proteomics identification</keyword>
<keyword id="KW-1185">Reference proteome</keyword>
<keyword id="KW-0809">Transit peptide</keyword>
<accession>Q92947</accession>
<accession>A8K2Z2</accession>
<accession>O14719</accession>
<proteinExistence type="evidence at protein level"/>
<protein>
    <recommendedName>
        <fullName>Glutaryl-CoA dehydrogenase, mitochondrial</fullName>
        <shortName>GCD</shortName>
        <ecNumber>1.3.8.6</ecNumber>
    </recommendedName>
</protein>
<organism>
    <name type="scientific">Homo sapiens</name>
    <name type="common">Human</name>
    <dbReference type="NCBI Taxonomy" id="9606"/>
    <lineage>
        <taxon>Eukaryota</taxon>
        <taxon>Metazoa</taxon>
        <taxon>Chordata</taxon>
        <taxon>Craniata</taxon>
        <taxon>Vertebrata</taxon>
        <taxon>Euteleostomi</taxon>
        <taxon>Mammalia</taxon>
        <taxon>Eutheria</taxon>
        <taxon>Euarchontoglires</taxon>
        <taxon>Primates</taxon>
        <taxon>Haplorrhini</taxon>
        <taxon>Catarrhini</taxon>
        <taxon>Hominidae</taxon>
        <taxon>Homo</taxon>
    </lineage>
</organism>
<reference key="1">
    <citation type="journal article" date="1992" name="Prog. Clin. Biol. Res.">
        <title>Pork and human cDNAs encoding glutaryl-CoA dehydrogenase.</title>
        <authorList>
            <person name="Goodman S.I."/>
            <person name="Kratz L.E."/>
            <person name="Frerman F.E."/>
        </authorList>
    </citation>
    <scope>NUCLEOTIDE SEQUENCE [MRNA] (ISOFORM LONG)</scope>
    <source>
        <tissue>Liver</tissue>
    </source>
</reference>
<reference key="2">
    <citation type="journal article" date="1995" name="Hum. Mol. Genet.">
        <title>Cloning of glutaryl-CoA dehydrogenase cDNA, and expression of wild type and mutant enzymes in Escherichia coli.</title>
        <authorList>
            <person name="Goodman S.I."/>
            <person name="Kratz L.E."/>
            <person name="Digiulio K.A."/>
            <person name="Biery B.J."/>
            <person name="Goodman K.E."/>
            <person name="Isaya G."/>
            <person name="Frerman F.E."/>
        </authorList>
    </citation>
    <scope>NUCLEOTIDE SEQUENCE [MRNA] (ISOFORMS LONG AND SHORT)</scope>
    <scope>FUNCTION</scope>
    <scope>CATALYTIC ACTIVITY</scope>
    <scope>VARIANT GA1 HIS-295</scope>
    <source>
        <tissue>Liver</tissue>
    </source>
</reference>
<reference key="3">
    <citation type="journal article" date="1998" name="Hum. Genet.">
        <title>The human glutaryl-CoA dehydrogenase gene: report of intronic sequences and of 13 novel mutations causing glutaric aciduria type I.</title>
        <authorList>
            <person name="Schwartz M."/>
            <person name="Christensen E."/>
            <person name="Superti-Furga A."/>
            <person name="Brandt N.J."/>
        </authorList>
    </citation>
    <scope>NUCLEOTIDE SEQUENCE [GENOMIC DNA]</scope>
    <scope>VARIANTS GA1 CYS-88; LEU-94; ILE-148; GLN-161; THR-191; THR-195; PRO-227; GLN-257; TRP-257; SER-278; TRP-294; THR-349; SER-354; HIS-355; MET-400; TRP-402; MET-429 AND GLU-433</scope>
</reference>
<reference key="4">
    <citation type="submission" date="2003-05" db="EMBL/GenBank/DDBJ databases">
        <title>Cloning of human full-length CDSs in BD Creator(TM) system donor vector.</title>
        <authorList>
            <person name="Kalnine N."/>
            <person name="Chen X."/>
            <person name="Rolfs A."/>
            <person name="Halleck A."/>
            <person name="Hines L."/>
            <person name="Eisenstein S."/>
            <person name="Koundinya M."/>
            <person name="Raphael J."/>
            <person name="Moreira D."/>
            <person name="Kelley T."/>
            <person name="LaBaer J."/>
            <person name="Lin Y."/>
            <person name="Phelan M."/>
            <person name="Farmer A."/>
        </authorList>
    </citation>
    <scope>NUCLEOTIDE SEQUENCE [LARGE SCALE MRNA] (ISOFORM LONG)</scope>
</reference>
<reference key="5">
    <citation type="journal article" date="2004" name="Nat. Genet.">
        <title>Complete sequencing and characterization of 21,243 full-length human cDNAs.</title>
        <authorList>
            <person name="Ota T."/>
            <person name="Suzuki Y."/>
            <person name="Nishikawa T."/>
            <person name="Otsuki T."/>
            <person name="Sugiyama T."/>
            <person name="Irie R."/>
            <person name="Wakamatsu A."/>
            <person name="Hayashi K."/>
            <person name="Sato H."/>
            <person name="Nagai K."/>
            <person name="Kimura K."/>
            <person name="Makita H."/>
            <person name="Sekine M."/>
            <person name="Obayashi M."/>
            <person name="Nishi T."/>
            <person name="Shibahara T."/>
            <person name="Tanaka T."/>
            <person name="Ishii S."/>
            <person name="Yamamoto J."/>
            <person name="Saito K."/>
            <person name="Kawai Y."/>
            <person name="Isono Y."/>
            <person name="Nakamura Y."/>
            <person name="Nagahari K."/>
            <person name="Murakami K."/>
            <person name="Yasuda T."/>
            <person name="Iwayanagi T."/>
            <person name="Wagatsuma M."/>
            <person name="Shiratori A."/>
            <person name="Sudo H."/>
            <person name="Hosoiri T."/>
            <person name="Kaku Y."/>
            <person name="Kodaira H."/>
            <person name="Kondo H."/>
            <person name="Sugawara M."/>
            <person name="Takahashi M."/>
            <person name="Kanda K."/>
            <person name="Yokoi T."/>
            <person name="Furuya T."/>
            <person name="Kikkawa E."/>
            <person name="Omura Y."/>
            <person name="Abe K."/>
            <person name="Kamihara K."/>
            <person name="Katsuta N."/>
            <person name="Sato K."/>
            <person name="Tanikawa M."/>
            <person name="Yamazaki M."/>
            <person name="Ninomiya K."/>
            <person name="Ishibashi T."/>
            <person name="Yamashita H."/>
            <person name="Murakawa K."/>
            <person name="Fujimori K."/>
            <person name="Tanai H."/>
            <person name="Kimata M."/>
            <person name="Watanabe M."/>
            <person name="Hiraoka S."/>
            <person name="Chiba Y."/>
            <person name="Ishida S."/>
            <person name="Ono Y."/>
            <person name="Takiguchi S."/>
            <person name="Watanabe S."/>
            <person name="Yosida M."/>
            <person name="Hotuta T."/>
            <person name="Kusano J."/>
            <person name="Kanehori K."/>
            <person name="Takahashi-Fujii A."/>
            <person name="Hara H."/>
            <person name="Tanase T.-O."/>
            <person name="Nomura Y."/>
            <person name="Togiya S."/>
            <person name="Komai F."/>
            <person name="Hara R."/>
            <person name="Takeuchi K."/>
            <person name="Arita M."/>
            <person name="Imose N."/>
            <person name="Musashino K."/>
            <person name="Yuuki H."/>
            <person name="Oshima A."/>
            <person name="Sasaki N."/>
            <person name="Aotsuka S."/>
            <person name="Yoshikawa Y."/>
            <person name="Matsunawa H."/>
            <person name="Ichihara T."/>
            <person name="Shiohata N."/>
            <person name="Sano S."/>
            <person name="Moriya S."/>
            <person name="Momiyama H."/>
            <person name="Satoh N."/>
            <person name="Takami S."/>
            <person name="Terashima Y."/>
            <person name="Suzuki O."/>
            <person name="Nakagawa S."/>
            <person name="Senoh A."/>
            <person name="Mizoguchi H."/>
            <person name="Goto Y."/>
            <person name="Shimizu F."/>
            <person name="Wakebe H."/>
            <person name="Hishigaki H."/>
            <person name="Watanabe T."/>
            <person name="Sugiyama A."/>
            <person name="Takemoto M."/>
            <person name="Kawakami B."/>
            <person name="Yamazaki M."/>
            <person name="Watanabe K."/>
            <person name="Kumagai A."/>
            <person name="Itakura S."/>
            <person name="Fukuzumi Y."/>
            <person name="Fujimori Y."/>
            <person name="Komiyama M."/>
            <person name="Tashiro H."/>
            <person name="Tanigami A."/>
            <person name="Fujiwara T."/>
            <person name="Ono T."/>
            <person name="Yamada K."/>
            <person name="Fujii Y."/>
            <person name="Ozaki K."/>
            <person name="Hirao M."/>
            <person name="Ohmori Y."/>
            <person name="Kawabata A."/>
            <person name="Hikiji T."/>
            <person name="Kobatake N."/>
            <person name="Inagaki H."/>
            <person name="Ikema Y."/>
            <person name="Okamoto S."/>
            <person name="Okitani R."/>
            <person name="Kawakami T."/>
            <person name="Noguchi S."/>
            <person name="Itoh T."/>
            <person name="Shigeta K."/>
            <person name="Senba T."/>
            <person name="Matsumura K."/>
            <person name="Nakajima Y."/>
            <person name="Mizuno T."/>
            <person name="Morinaga M."/>
            <person name="Sasaki M."/>
            <person name="Togashi T."/>
            <person name="Oyama M."/>
            <person name="Hata H."/>
            <person name="Watanabe M."/>
            <person name="Komatsu T."/>
            <person name="Mizushima-Sugano J."/>
            <person name="Satoh T."/>
            <person name="Shirai Y."/>
            <person name="Takahashi Y."/>
            <person name="Nakagawa K."/>
            <person name="Okumura K."/>
            <person name="Nagase T."/>
            <person name="Nomura N."/>
            <person name="Kikuchi H."/>
            <person name="Masuho Y."/>
            <person name="Yamashita R."/>
            <person name="Nakai K."/>
            <person name="Yada T."/>
            <person name="Nakamura Y."/>
            <person name="Ohara O."/>
            <person name="Isogai T."/>
            <person name="Sugano S."/>
        </authorList>
    </citation>
    <scope>NUCLEOTIDE SEQUENCE [LARGE SCALE MRNA] (ISOFORM LONG)</scope>
    <source>
        <tissue>Umbilical cord blood</tissue>
    </source>
</reference>
<reference key="6">
    <citation type="journal article" date="2004" name="Nature">
        <title>The DNA sequence and biology of human chromosome 19.</title>
        <authorList>
            <person name="Grimwood J."/>
            <person name="Gordon L.A."/>
            <person name="Olsen A.S."/>
            <person name="Terry A."/>
            <person name="Schmutz J."/>
            <person name="Lamerdin J.E."/>
            <person name="Hellsten U."/>
            <person name="Goodstein D."/>
            <person name="Couronne O."/>
            <person name="Tran-Gyamfi M."/>
            <person name="Aerts A."/>
            <person name="Altherr M."/>
            <person name="Ashworth L."/>
            <person name="Bajorek E."/>
            <person name="Black S."/>
            <person name="Branscomb E."/>
            <person name="Caenepeel S."/>
            <person name="Carrano A.V."/>
            <person name="Caoile C."/>
            <person name="Chan Y.M."/>
            <person name="Christensen M."/>
            <person name="Cleland C.A."/>
            <person name="Copeland A."/>
            <person name="Dalin E."/>
            <person name="Dehal P."/>
            <person name="Denys M."/>
            <person name="Detter J.C."/>
            <person name="Escobar J."/>
            <person name="Flowers D."/>
            <person name="Fotopulos D."/>
            <person name="Garcia C."/>
            <person name="Georgescu A.M."/>
            <person name="Glavina T."/>
            <person name="Gomez M."/>
            <person name="Gonzales E."/>
            <person name="Groza M."/>
            <person name="Hammon N."/>
            <person name="Hawkins T."/>
            <person name="Haydu L."/>
            <person name="Ho I."/>
            <person name="Huang W."/>
            <person name="Israni S."/>
            <person name="Jett J."/>
            <person name="Kadner K."/>
            <person name="Kimball H."/>
            <person name="Kobayashi A."/>
            <person name="Larionov V."/>
            <person name="Leem S.-H."/>
            <person name="Lopez F."/>
            <person name="Lou Y."/>
            <person name="Lowry S."/>
            <person name="Malfatti S."/>
            <person name="Martinez D."/>
            <person name="McCready P.M."/>
            <person name="Medina C."/>
            <person name="Morgan J."/>
            <person name="Nelson K."/>
            <person name="Nolan M."/>
            <person name="Ovcharenko I."/>
            <person name="Pitluck S."/>
            <person name="Pollard M."/>
            <person name="Popkie A.P."/>
            <person name="Predki P."/>
            <person name="Quan G."/>
            <person name="Ramirez L."/>
            <person name="Rash S."/>
            <person name="Retterer J."/>
            <person name="Rodriguez A."/>
            <person name="Rogers S."/>
            <person name="Salamov A."/>
            <person name="Salazar A."/>
            <person name="She X."/>
            <person name="Smith D."/>
            <person name="Slezak T."/>
            <person name="Solovyev V."/>
            <person name="Thayer N."/>
            <person name="Tice H."/>
            <person name="Tsai M."/>
            <person name="Ustaszewska A."/>
            <person name="Vo N."/>
            <person name="Wagner M."/>
            <person name="Wheeler J."/>
            <person name="Wu K."/>
            <person name="Xie G."/>
            <person name="Yang J."/>
            <person name="Dubchak I."/>
            <person name="Furey T.S."/>
            <person name="DeJong P."/>
            <person name="Dickson M."/>
            <person name="Gordon D."/>
            <person name="Eichler E.E."/>
            <person name="Pennacchio L.A."/>
            <person name="Richardson P."/>
            <person name="Stubbs L."/>
            <person name="Rokhsar D.S."/>
            <person name="Myers R.M."/>
            <person name="Rubin E.M."/>
            <person name="Lucas S.M."/>
        </authorList>
    </citation>
    <scope>NUCLEOTIDE SEQUENCE [LARGE SCALE GENOMIC DNA]</scope>
</reference>
<reference key="7">
    <citation type="submission" date="2005-07" db="EMBL/GenBank/DDBJ databases">
        <authorList>
            <person name="Mural R.J."/>
            <person name="Istrail S."/>
            <person name="Sutton G.G."/>
            <person name="Florea L."/>
            <person name="Halpern A.L."/>
            <person name="Mobarry C.M."/>
            <person name="Lippert R."/>
            <person name="Walenz B."/>
            <person name="Shatkay H."/>
            <person name="Dew I."/>
            <person name="Miller J.R."/>
            <person name="Flanigan M.J."/>
            <person name="Edwards N.J."/>
            <person name="Bolanos R."/>
            <person name="Fasulo D."/>
            <person name="Halldorsson B.V."/>
            <person name="Hannenhalli S."/>
            <person name="Turner R."/>
            <person name="Yooseph S."/>
            <person name="Lu F."/>
            <person name="Nusskern D.R."/>
            <person name="Shue B.C."/>
            <person name="Zheng X.H."/>
            <person name="Zhong F."/>
            <person name="Delcher A.L."/>
            <person name="Huson D.H."/>
            <person name="Kravitz S.A."/>
            <person name="Mouchard L."/>
            <person name="Reinert K."/>
            <person name="Remington K.A."/>
            <person name="Clark A.G."/>
            <person name="Waterman M.S."/>
            <person name="Eichler E.E."/>
            <person name="Adams M.D."/>
            <person name="Hunkapiller M.W."/>
            <person name="Myers E.W."/>
            <person name="Venter J.C."/>
        </authorList>
    </citation>
    <scope>NUCLEOTIDE SEQUENCE [LARGE SCALE GENOMIC DNA]</scope>
</reference>
<reference key="8">
    <citation type="journal article" date="2004" name="Genome Res.">
        <title>The status, quality, and expansion of the NIH full-length cDNA project: the Mammalian Gene Collection (MGC).</title>
        <authorList>
            <consortium name="The MGC Project Team"/>
        </authorList>
    </citation>
    <scope>NUCLEOTIDE SEQUENCE [LARGE SCALE MRNA] (ISOFORM LONG)</scope>
    <source>
        <tissue>Lymph</tissue>
    </source>
</reference>
<reference key="9">
    <citation type="journal article" date="1984" name="J. Clin. Invest.">
        <title>Specific glutaryl-CoA dehydrogenating activity is deficient in cultured fibroblasts from glutaric aciduria patients.</title>
        <authorList>
            <person name="Hyman D.B."/>
            <person name="Tanaka K."/>
        </authorList>
    </citation>
    <scope>FUNCTION</scope>
    <scope>ACTIVITY REGULATION</scope>
    <scope>BIOPHYSICOCHEMICAL PROPERTIES</scope>
</reference>
<reference key="10">
    <citation type="journal article" date="1998" name="Hum. Mutat.">
        <title>Glutaryl-CoA dehydrogenase mutations in glutaric acidemia (type I): review and report of thirty novel mutations.</title>
        <authorList>
            <person name="Goodman S.I."/>
            <person name="Stein D.E."/>
            <person name="Schlesinger S."/>
            <person name="Christensen E."/>
            <person name="Schwartz M."/>
            <person name="Greenberg C.R."/>
            <person name="Elpeleg O.N."/>
        </authorList>
    </citation>
    <scope>VARIANTS GA1 TYR-115; VAL-122; GLY-128; GLY-138; LEU-139; ARG-178; ARG-179; LEU-236; VAL-266; SER-308; TRP-309; TRP-313; GLU-333; ARG-354; CYS-355; LYS-365; THR-382; CYS-383; HIS-383; GLN-386; ALA-390; ASP-392; GLN-402; ARG-403; LYS-406; PRO-407; LYS-414; THR-421 AND VAL-421</scope>
    <scope>VARIANTS THR-298 AND VAL-298</scope>
</reference>
<reference key="11">
    <citation type="journal article" date="2006" name="Biochemistry">
        <title>Kinetic mechanism of glutaryl-CoA dehydrogenase.</title>
        <authorList>
            <person name="Rao K.S."/>
            <person name="Albro M."/>
            <person name="Dwyer T.M."/>
            <person name="Frerman F.E."/>
        </authorList>
    </citation>
    <scope>FUNCTION</scope>
    <scope>BIOPHYSICOCHEMICAL PROPERTIES</scope>
</reference>
<reference key="12">
    <citation type="journal article" date="2011" name="BMC Syst. Biol.">
        <title>Initial characterization of the human central proteome.</title>
        <authorList>
            <person name="Burkard T.R."/>
            <person name="Planyavsky M."/>
            <person name="Kaupe I."/>
            <person name="Breitwieser F.P."/>
            <person name="Buerckstuemmer T."/>
            <person name="Bennett K.L."/>
            <person name="Superti-Furga G."/>
            <person name="Colinge J."/>
        </authorList>
    </citation>
    <scope>IDENTIFICATION BY MASS SPECTROMETRY [LARGE SCALE ANALYSIS]</scope>
</reference>
<reference key="13">
    <citation type="journal article" date="2014" name="J. Proteomics">
        <title>An enzyme assisted RP-RPLC approach for in-depth analysis of human liver phosphoproteome.</title>
        <authorList>
            <person name="Bian Y."/>
            <person name="Song C."/>
            <person name="Cheng K."/>
            <person name="Dong M."/>
            <person name="Wang F."/>
            <person name="Huang J."/>
            <person name="Sun D."/>
            <person name="Wang L."/>
            <person name="Ye M."/>
            <person name="Zou H."/>
        </authorList>
    </citation>
    <scope>IDENTIFICATION BY MASS SPECTROMETRY [LARGE SCALE ANALYSIS]</scope>
    <source>
        <tissue>Liver</tissue>
    </source>
</reference>
<reference key="14">
    <citation type="journal article" date="2015" name="Proteomics">
        <title>N-terminome analysis of the human mitochondrial proteome.</title>
        <authorList>
            <person name="Vaca Jacome A.S."/>
            <person name="Rabilloud T."/>
            <person name="Schaeffer-Reiss C."/>
            <person name="Rompais M."/>
            <person name="Ayoub D."/>
            <person name="Lane L."/>
            <person name="Bairoch A."/>
            <person name="Van Dorsselaer A."/>
            <person name="Carapito C."/>
        </authorList>
    </citation>
    <scope>IDENTIFICATION BY MASS SPECTROMETRY [LARGE SCALE ANALYSIS]</scope>
</reference>
<reference key="15">
    <citation type="journal article" date="2004" name="Biochemistry">
        <title>Crystal structures of human glutaryl-CoA dehydrogenase with and without an alternate substrate: structural bases of dehydrogenation and decarboxylation reactions.</title>
        <authorList>
            <person name="Fu Z."/>
            <person name="Wang M."/>
            <person name="Paschke R."/>
            <person name="Rao K.S."/>
            <person name="Frerman F.E."/>
            <person name="Kim J.-J.P."/>
        </authorList>
    </citation>
    <scope>X-RAY CRYSTALLOGRAPHY (2.1 ANGSTROMS) OF 47-438 IN COMPLEXES WITH SUBSTRATE ANALOG AND FAD</scope>
    <scope>SUBUNIT</scope>
</reference>
<reference key="16">
    <citation type="journal article" date="2007" name="Biochemistry">
        <title>The effect of a Glu370Asp mutation in glutaryl-CoA dehydrogenase on proton transfer to the dienolate intermediate.</title>
        <authorList>
            <person name="Rao K.S."/>
            <person name="Fu Z."/>
            <person name="Albro M."/>
            <person name="Narayanan B."/>
            <person name="Baddam S."/>
            <person name="Lee H.-J.K."/>
            <person name="Kim J.-J.P."/>
            <person name="Frerman F.E."/>
        </authorList>
    </citation>
    <scope>X-RAY CRYSTALLOGRAPHY (2.3 ANGSTROMS) OF 45-438 OF MUTANT ASP-414 IN COMPLEXES WITH SUBSTRATE AND FAD</scope>
</reference>
<reference key="17">
    <citation type="journal article" date="1996" name="Am. J. Hum. Genet.">
        <title>Gene structure and mutations of glutaryl-coenzyme A dehydrogenase: impaired association of enzyme subunits that is due to an A421V substitution causes glutaric acidemia type I in the Amish.</title>
        <authorList>
            <person name="Biery B.J."/>
            <person name="Stein D.E."/>
            <person name="Morton D.H."/>
            <person name="Goodman S.I."/>
        </authorList>
    </citation>
    <scope>VARIANTS GA1</scope>
</reference>
<reference key="18">
    <citation type="journal article" date="1996" name="Am. J. Hum. Genet.">
        <title>Glutaric aciduria type I in the Arab and Jewish communities in Israel.</title>
        <authorList>
            <person name="Anikster Y."/>
            <person name="Shaag A."/>
            <person name="Joseph A."/>
            <person name="Mandel H."/>
            <person name="Ben-Zeev B."/>
            <person name="Christensen E."/>
            <person name="Elpeleg O.N."/>
        </authorList>
    </citation>
    <scope>VARIANTS GA1 ARG-101; PRO-283; THR-293; LEU-305; ARG-390 AND ILE-416</scope>
</reference>
<reference key="19">
    <citation type="journal article" date="2003" name="J. Inherit. Metab. Dis.">
        <title>Severe phenotype despite high residual glutaryl-CoA dehydrogenase activity: a novel mutation in a Turkish patient with glutaric aciduria type I.</title>
        <authorList>
            <person name="Muehlhausen C."/>
            <person name="Christensen E."/>
            <person name="Schwartz M."/>
            <person name="Muschol N."/>
            <person name="Ullrich K."/>
            <person name="Lukacs Z."/>
        </authorList>
    </citation>
    <scope>VARIANT GA1 VAL-263</scope>
</reference>
<reference key="20">
    <citation type="journal article" date="2008" name="Hum. Mol. Genet.">
        <title>Disease-causing missense mutations affect enzymatic activity, stability and oligomerization of glutaryl-CoA dehydrogenase (GCDH).</title>
        <authorList>
            <person name="Keyser B."/>
            <person name="Muehlhausen C."/>
            <person name="Dickmanns A."/>
            <person name="Christensen E."/>
            <person name="Muschol N."/>
            <person name="Ullrich K."/>
            <person name="Braulke T."/>
        </authorList>
    </citation>
    <scope>CHARACTERIZATION OF VARIANTS GA1 GLY-138; TRP-402 AND LYS-414</scope>
    <scope>SUBUNIT</scope>
</reference>
<reference key="21">
    <citation type="journal article" date="2014" name="Clin. Biochem.">
        <title>Molecular analysis of Cypriot patients with Glutaric aciduria type I: Identification of two novel mutations.</title>
        <authorList>
            <person name="Georgiou T."/>
            <person name="Nicolaidou P."/>
            <person name="Hadjichristou A."/>
            <person name="Ioannou R."/>
            <person name="Dionysiou M."/>
            <person name="Siama E."/>
            <person name="Chappa G."/>
            <person name="Anastasiadou V."/>
            <person name="Drousiotou A."/>
        </authorList>
    </citation>
    <scope>VARIANTS GA1 ASP-64; VAL-268; ARG-375; TRP-402 AND MET-429</scope>
</reference>
<feature type="transit peptide" description="Mitochondrion" evidence="3">
    <location>
        <begin position="1"/>
        <end position="44"/>
    </location>
</feature>
<feature type="chain" id="PRO_0000000526" description="Glutaryl-CoA dehydrogenase, mitochondrial">
    <location>
        <begin position="45"/>
        <end position="438"/>
    </location>
</feature>
<feature type="active site" description="Proton acceptor" evidence="16">
    <location>
        <position position="414"/>
    </location>
</feature>
<feature type="binding site">
    <location>
        <begin position="138"/>
        <end position="139"/>
    </location>
    <ligand>
        <name>substrate</name>
    </ligand>
</feature>
<feature type="binding site">
    <location>
        <begin position="177"/>
        <end position="186"/>
    </location>
    <ligand>
        <name>FAD</name>
        <dbReference type="ChEBI" id="CHEBI:57692"/>
    </ligand>
</feature>
<feature type="binding site">
    <location>
        <position position="186"/>
    </location>
    <ligand>
        <name>substrate</name>
    </ligand>
</feature>
<feature type="binding site">
    <location>
        <begin position="212"/>
        <end position="214"/>
    </location>
    <ligand>
        <name>FAD</name>
        <dbReference type="ChEBI" id="CHEBI:57692"/>
    </ligand>
</feature>
<feature type="binding site">
    <location>
        <begin position="287"/>
        <end position="294"/>
    </location>
    <ligand>
        <name>substrate</name>
    </ligand>
</feature>
<feature type="binding site" evidence="1">
    <location>
        <position position="319"/>
    </location>
    <ligand>
        <name>FAD</name>
        <dbReference type="ChEBI" id="CHEBI:57692"/>
    </ligand>
</feature>
<feature type="binding site" evidence="1">
    <location>
        <position position="330"/>
    </location>
    <ligand>
        <name>FAD</name>
        <dbReference type="ChEBI" id="CHEBI:57692"/>
    </ligand>
</feature>
<feature type="binding site" evidence="1">
    <location>
        <begin position="387"/>
        <end position="391"/>
    </location>
    <ligand>
        <name>FAD</name>
        <dbReference type="ChEBI" id="CHEBI:57692"/>
    </ligand>
</feature>
<feature type="binding site">
    <location>
        <position position="415"/>
    </location>
    <ligand>
        <name>substrate</name>
    </ligand>
</feature>
<feature type="binding site">
    <location>
        <begin position="416"/>
        <end position="418"/>
    </location>
    <ligand>
        <name>FAD</name>
        <dbReference type="ChEBI" id="CHEBI:57692"/>
    </ligand>
</feature>
<feature type="binding site">
    <location>
        <position position="434"/>
    </location>
    <ligand>
        <name>FAD</name>
        <dbReference type="ChEBI" id="CHEBI:57692"/>
    </ligand>
</feature>
<feature type="modified residue" description="N6-acetyllysine" evidence="2">
    <location>
        <position position="240"/>
    </location>
</feature>
<feature type="splice variant" id="VSP_000145" description="In isoform Short." evidence="15">
    <original>GTHDIHALILGRAITGIQAFTASK</original>
    <variation>VVQMCSLKRRWNSL</variation>
    <location>
        <begin position="415"/>
        <end position="438"/>
    </location>
</feature>
<feature type="sequence variant" id="VAR_071510" description="In GA1; dbSNP:rs1555749239." evidence="8">
    <original>E</original>
    <variation>D</variation>
    <location>
        <position position="64"/>
    </location>
</feature>
<feature type="sequence variant" id="VAR_000366" description="In GA1; dbSNP:rs142967670." evidence="13">
    <original>R</original>
    <variation>C</variation>
    <location>
        <position position="88"/>
    </location>
</feature>
<feature type="sequence variant" id="VAR_000367" description="In GA1; dbSNP:rs566417795." evidence="13">
    <original>R</original>
    <variation>L</variation>
    <location>
        <position position="94"/>
    </location>
</feature>
<feature type="sequence variant" id="VAR_000368" description="In GA1; dbSNP:rs1273164833." evidence="12">
    <original>G</original>
    <variation>R</variation>
    <location>
        <position position="101"/>
    </location>
</feature>
<feature type="sequence variant" id="VAR_000369" description="In GA1; dbSNP:rs776758971." evidence="14">
    <original>C</original>
    <variation>Y</variation>
    <location>
        <position position="115"/>
    </location>
</feature>
<feature type="sequence variant" id="VAR_000370" description="In GA1; dbSNP:rs766325846." evidence="14">
    <original>A</original>
    <variation>V</variation>
    <location>
        <position position="122"/>
    </location>
</feature>
<feature type="sequence variant" id="VAR_000371" description="In GA1." evidence="14">
    <original>R</original>
    <variation>G</variation>
    <location>
        <position position="128"/>
    </location>
</feature>
<feature type="sequence variant" id="VAR_000372" description="In GA1; impaired protein stability; loss of activity; dbSNP:rs897036690." evidence="7 14">
    <original>R</original>
    <variation>G</variation>
    <location>
        <position position="138"/>
    </location>
</feature>
<feature type="sequence variant" id="VAR_000373" description="In GA1; dbSNP:rs139851890." evidence="14">
    <original>S</original>
    <variation>L</variation>
    <location>
        <position position="139"/>
    </location>
</feature>
<feature type="sequence variant" id="VAR_000374" description="In GA1; dbSNP:rs1003611285." evidence="13">
    <original>V</original>
    <variation>I</variation>
    <location>
        <position position="148"/>
    </location>
</feature>
<feature type="sequence variant" id="VAR_000375" description="In GA1; dbSNP:rs777201305." evidence="13">
    <original>R</original>
    <variation>Q</variation>
    <location>
        <position position="161"/>
    </location>
</feature>
<feature type="sequence variant" id="VAR_000376" description="In GA1; dbSNP:rs749452002." evidence="14">
    <original>G</original>
    <variation>R</variation>
    <location>
        <position position="178"/>
    </location>
</feature>
<feature type="sequence variant" id="VAR_000377" description="In GA1; dbSNP:rs774526353." evidence="14">
    <original>L</original>
    <variation>R</variation>
    <location>
        <position position="179"/>
    </location>
</feature>
<feature type="sequence variant" id="VAR_000378" description="In GA1; dbSNP:rs149120354." evidence="13">
    <original>M</original>
    <variation>T</variation>
    <location>
        <position position="191"/>
    </location>
</feature>
<feature type="sequence variant" id="VAR_000379" description="In GA1." evidence="13">
    <original>A</original>
    <variation>T</variation>
    <location>
        <position position="195"/>
    </location>
</feature>
<feature type="sequence variant" id="VAR_000380" description="In GA1; dbSNP:rs121434373." evidence="13">
    <original>R</original>
    <variation>P</variation>
    <location>
        <position position="227"/>
    </location>
</feature>
<feature type="sequence variant" id="VAR_000381" description="In GA1; dbSNP:rs747920711." evidence="14">
    <original>F</original>
    <variation>L</variation>
    <location>
        <position position="236"/>
    </location>
</feature>
<feature type="sequence variant" id="VAR_000382" description="In GA1; dbSNP:rs751583656." evidence="13">
    <original>R</original>
    <variation>Q</variation>
    <location>
        <position position="257"/>
    </location>
</feature>
<feature type="sequence variant" id="VAR_000383" description="In GA1; dbSNP:rs766518430." evidence="13">
    <original>R</original>
    <variation>W</variation>
    <location>
        <position position="257"/>
    </location>
</feature>
<feature type="sequence variant" id="VAR_060588" description="In GA1; severe phenotype; residual activity of 30% as measured in patient fibroblasts." evidence="4">
    <original>M</original>
    <variation>V</variation>
    <location>
        <position position="263"/>
    </location>
</feature>
<feature type="sequence variant" id="VAR_000384" description="In GA1; dbSNP:rs745357523." evidence="14">
    <original>M</original>
    <variation>V</variation>
    <location>
        <position position="266"/>
    </location>
</feature>
<feature type="sequence variant" id="VAR_071511" description="In GA1; dbSNP:rs765723076." evidence="8">
    <original>G</original>
    <variation>V</variation>
    <location>
        <position position="268"/>
    </location>
</feature>
<feature type="sequence variant" id="VAR_000385" description="In GA1; dbSNP:rs751742575." evidence="13">
    <original>P</original>
    <variation>S</variation>
    <location>
        <position position="278"/>
    </location>
</feature>
<feature type="sequence variant" id="VAR_000386" description="In GA1." evidence="12">
    <original>L</original>
    <variation>P</variation>
    <location>
        <position position="283"/>
    </location>
</feature>
<feature type="sequence variant" id="VAR_000387" description="In GA1; dbSNP:rs121434371." evidence="12">
    <original>A</original>
    <variation>T</variation>
    <location>
        <position position="293"/>
    </location>
</feature>
<feature type="sequence variant" id="VAR_000388" description="In GA1." evidence="13">
    <original>R</original>
    <variation>W</variation>
    <location>
        <position position="294"/>
    </location>
</feature>
<feature type="sequence variant" id="VAR_000389" description="In GA1; dbSNP:rs121434366." evidence="10">
    <original>Y</original>
    <variation>H</variation>
    <location>
        <position position="295"/>
    </location>
</feature>
<feature type="sequence variant" id="VAR_000390" description="In dbSNP:rs761765983." evidence="14">
    <original>A</original>
    <variation>T</variation>
    <location>
        <position position="298"/>
    </location>
</feature>
<feature type="sequence variant" id="VAR_000391" description="In dbSNP:rs764993096." evidence="14">
    <original>A</original>
    <variation>V</variation>
    <location>
        <position position="298"/>
    </location>
</feature>
<feature type="sequence variant" id="VAR_000392" description="In GA1; dbSNP:rs1260580183." evidence="12">
    <original>S</original>
    <variation>L</variation>
    <location>
        <position position="305"/>
    </location>
</feature>
<feature type="sequence variant" id="VAR_000393" description="In GA1; dbSNP:rs1205368991." evidence="14">
    <original>C</original>
    <variation>S</variation>
    <location>
        <position position="308"/>
    </location>
</feature>
<feature type="sequence variant" id="VAR_000394" description="In GA1; dbSNP:rs1247712895." evidence="14">
    <original>L</original>
    <variation>W</variation>
    <location>
        <position position="309"/>
    </location>
</feature>
<feature type="sequence variant" id="VAR_000395" description="In GA1; dbSNP:rs779315456." evidence="14">
    <original>R</original>
    <variation>W</variation>
    <location>
        <position position="313"/>
    </location>
</feature>
<feature type="sequence variant" id="VAR_000396" description="In GA1; dbSNP:rs794726972." evidence="14">
    <original>Q</original>
    <variation>E</variation>
    <location>
        <position position="333"/>
    </location>
</feature>
<feature type="sequence variant" id="VAR_000397" description="In GA1; dbSNP:rs1257292639." evidence="13">
    <original>A</original>
    <variation>T</variation>
    <location>
        <position position="349"/>
    </location>
</feature>
<feature type="sequence variant" id="VAR_000398" description="In GA1." evidence="14">
    <original>G</original>
    <variation>R</variation>
    <location>
        <position position="354"/>
    </location>
</feature>
<feature type="sequence variant" id="VAR_000399" description="In GA1; dbSNP:rs768925619." evidence="13">
    <original>G</original>
    <variation>S</variation>
    <location>
        <position position="354"/>
    </location>
</feature>
<feature type="sequence variant" id="VAR_000400" description="In GA1; dbSNP:rs781477694." evidence="14">
    <original>R</original>
    <variation>C</variation>
    <location>
        <position position="355"/>
    </location>
</feature>
<feature type="sequence variant" id="VAR_000401" description="In GA1; dbSNP:rs748275416." evidence="13">
    <original>R</original>
    <variation>H</variation>
    <location>
        <position position="355"/>
    </location>
</feature>
<feature type="sequence variant" id="VAR_000402" description="In GA1; dbSNP:rs121434370." evidence="14">
    <original>E</original>
    <variation>K</variation>
    <location>
        <position position="365"/>
    </location>
</feature>
<feature type="sequence variant" id="VAR_000403" description="In GA1; dbSNP:rs1348974766." evidence="8">
    <original>C</original>
    <variation>R</variation>
    <location>
        <position position="375"/>
    </location>
</feature>
<feature type="sequence variant" id="VAR_000404" description="In GA1; dbSNP:rs567564095." evidence="14">
    <original>A</original>
    <variation>T</variation>
    <location>
        <position position="382"/>
    </location>
</feature>
<feature type="sequence variant" id="VAR_000405" description="In GA1; dbSNP:rs150938052." evidence="14">
    <original>R</original>
    <variation>C</variation>
    <location>
        <position position="383"/>
    </location>
</feature>
<feature type="sequence variant" id="VAR_000406" description="In GA1; dbSNP:rs764608975." evidence="14">
    <original>R</original>
    <variation>H</variation>
    <location>
        <position position="383"/>
    </location>
</feature>
<feature type="sequence variant" id="VAR_000407" description="In GA1; dbSNP:rs398123190." evidence="14">
    <original>R</original>
    <variation>Q</variation>
    <location>
        <position position="386"/>
    </location>
</feature>
<feature type="sequence variant" id="VAR_000409" description="In GA1; dbSNP:rs778153326." evidence="14">
    <original>G</original>
    <variation>A</variation>
    <location>
        <position position="390"/>
    </location>
</feature>
<feature type="sequence variant" id="VAR_000408" description="In GA1; dbSNP:rs372983141." evidence="12">
    <original>G</original>
    <variation>R</variation>
    <location>
        <position position="390"/>
    </location>
</feature>
<feature type="sequence variant" id="VAR_000410" description="In GA1; dbSNP:rs1282266790." evidence="14">
    <original>N</original>
    <variation>D</variation>
    <location>
        <position position="392"/>
    </location>
</feature>
<feature type="sequence variant" id="VAR_000411" description="In GA1; dbSNP:rs121434372." evidence="13">
    <original>V</original>
    <variation>M</variation>
    <location>
        <position position="400"/>
    </location>
</feature>
<feature type="sequence variant" id="VAR_000413" description="In GA1; dbSNP:rs786204626." evidence="14">
    <original>R</original>
    <variation>Q</variation>
    <location>
        <position position="402"/>
    </location>
</feature>
<feature type="sequence variant" id="VAR_000412" description="In GA1; most common mutation identified; loss of tetramerization; loss enzyme activity; dbSNP:rs121434369." evidence="7 8 13">
    <original>R</original>
    <variation>W</variation>
    <location>
        <position position="402"/>
    </location>
</feature>
<feature type="sequence variant" id="VAR_000414" description="In GA1." evidence="14">
    <original>H</original>
    <variation>R</variation>
    <location>
        <position position="403"/>
    </location>
</feature>
<feature type="sequence variant" id="VAR_000415" description="In GA1." evidence="14">
    <original>N</original>
    <variation>K</variation>
    <location>
        <position position="406"/>
    </location>
</feature>
<feature type="sequence variant" id="VAR_000416" description="In GA1; dbSNP:rs1555751379." evidence="14">
    <original>L</original>
    <variation>P</variation>
    <location>
        <position position="407"/>
    </location>
</feature>
<feature type="sequence variant" id="VAR_000417" description="In GA1; loss of enzyme activity; dbSNP:rs147611168." evidence="7 14">
    <original>E</original>
    <variation>K</variation>
    <location>
        <position position="414"/>
    </location>
</feature>
<feature type="sequence variant" id="VAR_000418" description="In GA1; dbSNP:rs121434368." evidence="12">
    <original>T</original>
    <variation>I</variation>
    <location>
        <position position="416"/>
    </location>
</feature>
<feature type="sequence variant" id="VAR_000419" description="In GA1; dbSNP:rs151201155." evidence="14">
    <original>A</original>
    <variation>T</variation>
    <location>
        <position position="421"/>
    </location>
</feature>
<feature type="sequence variant" id="VAR_000420" description="In GA1; impaired association of subunits; dbSNP:rs121434367." evidence="14">
    <original>A</original>
    <variation>V</variation>
    <location>
        <position position="421"/>
    </location>
</feature>
<feature type="sequence variant" id="VAR_000421" description="In GA1; dbSNP:rs745360675." evidence="8 13">
    <original>T</original>
    <variation>M</variation>
    <location>
        <position position="429"/>
    </location>
</feature>
<feature type="sequence variant" id="VAR_000422" description="In GA1; dbSNP:rs933624223." evidence="13">
    <original>A</original>
    <variation>E</variation>
    <location>
        <position position="433"/>
    </location>
</feature>
<feature type="mutagenesis site" description="Reduced catalytic activity.">
    <original>E</original>
    <variation>D</variation>
    <location>
        <position position="414"/>
    </location>
</feature>
<feature type="sequence conflict" description="In Ref. 1; AAC52079." evidence="16" ref="1">
    <original>G</original>
    <variation>A</variation>
    <location>
        <position position="33"/>
    </location>
</feature>
<feature type="helix" evidence="17">
    <location>
        <begin position="56"/>
        <end position="59"/>
    </location>
</feature>
<feature type="helix" evidence="17">
    <location>
        <begin position="62"/>
        <end position="78"/>
    </location>
</feature>
<feature type="helix" evidence="17">
    <location>
        <begin position="80"/>
        <end position="89"/>
    </location>
</feature>
<feature type="helix" evidence="17">
    <location>
        <begin position="95"/>
        <end position="102"/>
    </location>
</feature>
<feature type="helix" evidence="17">
    <location>
        <begin position="120"/>
        <end position="131"/>
    </location>
</feature>
<feature type="helix" evidence="17">
    <location>
        <begin position="135"/>
        <end position="146"/>
    </location>
</feature>
<feature type="helix" evidence="17">
    <location>
        <begin position="149"/>
        <end position="155"/>
    </location>
</feature>
<feature type="helix" evidence="17">
    <location>
        <begin position="158"/>
        <end position="169"/>
    </location>
</feature>
<feature type="strand" evidence="17">
    <location>
        <begin position="175"/>
        <end position="178"/>
    </location>
</feature>
<feature type="strand" evidence="17">
    <location>
        <begin position="184"/>
        <end position="186"/>
    </location>
</feature>
<feature type="helix" evidence="17">
    <location>
        <begin position="188"/>
        <end position="190"/>
    </location>
</feature>
<feature type="strand" evidence="17">
    <location>
        <begin position="194"/>
        <end position="198"/>
    </location>
</feature>
<feature type="turn" evidence="17">
    <location>
        <begin position="199"/>
        <end position="202"/>
    </location>
</feature>
<feature type="strand" evidence="17">
    <location>
        <begin position="203"/>
        <end position="214"/>
    </location>
</feature>
<feature type="helix" evidence="17">
    <location>
        <begin position="216"/>
        <end position="218"/>
    </location>
</feature>
<feature type="strand" evidence="17">
    <location>
        <begin position="220"/>
        <end position="228"/>
    </location>
</feature>
<feature type="strand" evidence="17">
    <location>
        <begin position="233"/>
        <end position="239"/>
    </location>
</feature>
<feature type="strand" evidence="17">
    <location>
        <begin position="254"/>
        <end position="256"/>
    </location>
</feature>
<feature type="strand" evidence="17">
    <location>
        <begin position="261"/>
        <end position="272"/>
    </location>
</feature>
<feature type="helix" evidence="17">
    <location>
        <begin position="273"/>
        <end position="275"/>
    </location>
</feature>
<feature type="helix" evidence="17">
    <location>
        <begin position="284"/>
        <end position="318"/>
    </location>
</feature>
<feature type="helix" evidence="17">
    <location>
        <begin position="326"/>
        <end position="328"/>
    </location>
</feature>
<feature type="helix" evidence="17">
    <location>
        <begin position="330"/>
        <end position="358"/>
    </location>
</feature>
<feature type="helix" evidence="17">
    <location>
        <begin position="364"/>
        <end position="388"/>
    </location>
</feature>
<feature type="helix" evidence="17">
    <location>
        <begin position="389"/>
        <end position="394"/>
    </location>
</feature>
<feature type="helix" evidence="17">
    <location>
        <begin position="396"/>
        <end position="398"/>
    </location>
</feature>
<feature type="helix" evidence="17">
    <location>
        <begin position="400"/>
        <end position="410"/>
    </location>
</feature>
<feature type="strand" evidence="17">
    <location>
        <begin position="413"/>
        <end position="415"/>
    </location>
</feature>
<feature type="helix" evidence="17">
    <location>
        <begin position="417"/>
        <end position="429"/>
    </location>
</feature>